<comment type="similarity">
    <text evidence="1">Belongs to the bacterial ribosomal protein bL28 family.</text>
</comment>
<keyword id="KW-0687">Ribonucleoprotein</keyword>
<keyword id="KW-0689">Ribosomal protein</keyword>
<proteinExistence type="inferred from homology"/>
<dbReference type="EMBL" id="CP000720">
    <property type="protein sequence ID" value="ABS47059.1"/>
    <property type="molecule type" value="Genomic_DNA"/>
</dbReference>
<dbReference type="RefSeq" id="WP_002208991.1">
    <property type="nucleotide sequence ID" value="NC_009708.1"/>
</dbReference>
<dbReference type="SMR" id="A7FCT5"/>
<dbReference type="GeneID" id="96663531"/>
<dbReference type="KEGG" id="ypi:YpsIP31758_0062"/>
<dbReference type="HOGENOM" id="CLU_064548_3_1_6"/>
<dbReference type="Proteomes" id="UP000002412">
    <property type="component" value="Chromosome"/>
</dbReference>
<dbReference type="GO" id="GO:1990904">
    <property type="term" value="C:ribonucleoprotein complex"/>
    <property type="evidence" value="ECO:0007669"/>
    <property type="project" value="UniProtKB-KW"/>
</dbReference>
<dbReference type="GO" id="GO:0005840">
    <property type="term" value="C:ribosome"/>
    <property type="evidence" value="ECO:0007669"/>
    <property type="project" value="UniProtKB-KW"/>
</dbReference>
<dbReference type="GO" id="GO:0003735">
    <property type="term" value="F:structural constituent of ribosome"/>
    <property type="evidence" value="ECO:0007669"/>
    <property type="project" value="InterPro"/>
</dbReference>
<dbReference type="GO" id="GO:0006412">
    <property type="term" value="P:translation"/>
    <property type="evidence" value="ECO:0007669"/>
    <property type="project" value="UniProtKB-UniRule"/>
</dbReference>
<dbReference type="FunFam" id="2.30.170.40:FF:000001">
    <property type="entry name" value="50S ribosomal protein L28"/>
    <property type="match status" value="1"/>
</dbReference>
<dbReference type="Gene3D" id="2.30.170.40">
    <property type="entry name" value="Ribosomal protein L28/L24"/>
    <property type="match status" value="1"/>
</dbReference>
<dbReference type="HAMAP" id="MF_00373">
    <property type="entry name" value="Ribosomal_bL28"/>
    <property type="match status" value="1"/>
</dbReference>
<dbReference type="InterPro" id="IPR050096">
    <property type="entry name" value="Bacterial_rp_bL28"/>
</dbReference>
<dbReference type="InterPro" id="IPR026569">
    <property type="entry name" value="Ribosomal_bL28"/>
</dbReference>
<dbReference type="InterPro" id="IPR034704">
    <property type="entry name" value="Ribosomal_bL28/bL31-like_sf"/>
</dbReference>
<dbReference type="InterPro" id="IPR001383">
    <property type="entry name" value="Ribosomal_bL28_bact-type"/>
</dbReference>
<dbReference type="InterPro" id="IPR037147">
    <property type="entry name" value="Ribosomal_bL28_sf"/>
</dbReference>
<dbReference type="NCBIfam" id="TIGR00009">
    <property type="entry name" value="L28"/>
    <property type="match status" value="1"/>
</dbReference>
<dbReference type="PANTHER" id="PTHR39080">
    <property type="entry name" value="50S RIBOSOMAL PROTEIN L28"/>
    <property type="match status" value="1"/>
</dbReference>
<dbReference type="PANTHER" id="PTHR39080:SF1">
    <property type="entry name" value="LARGE RIBOSOMAL SUBUNIT PROTEIN BL28A"/>
    <property type="match status" value="1"/>
</dbReference>
<dbReference type="Pfam" id="PF00830">
    <property type="entry name" value="Ribosomal_L28"/>
    <property type="match status" value="1"/>
</dbReference>
<dbReference type="SUPFAM" id="SSF143800">
    <property type="entry name" value="L28p-like"/>
    <property type="match status" value="1"/>
</dbReference>
<gene>
    <name evidence="1" type="primary">rpmB</name>
    <name type="ordered locus">YpsIP31758_0062</name>
</gene>
<protein>
    <recommendedName>
        <fullName evidence="1">Large ribosomal subunit protein bL28</fullName>
    </recommendedName>
    <alternativeName>
        <fullName evidence="3">50S ribosomal protein L28</fullName>
    </alternativeName>
</protein>
<sequence>MSRVCQVTGKRPMSGNNRSHAMNATKRRFLPNLHSHRFWVEGEKRFVTLRVSAKGMRVIDKKGIETVLAEIRARGEKY</sequence>
<name>RL28_YERP3</name>
<reference key="1">
    <citation type="journal article" date="2007" name="PLoS Genet.">
        <title>The complete genome sequence of Yersinia pseudotuberculosis IP31758, the causative agent of Far East scarlet-like fever.</title>
        <authorList>
            <person name="Eppinger M."/>
            <person name="Rosovitz M.J."/>
            <person name="Fricke W.F."/>
            <person name="Rasko D.A."/>
            <person name="Kokorina G."/>
            <person name="Fayolle C."/>
            <person name="Lindler L.E."/>
            <person name="Carniel E."/>
            <person name="Ravel J."/>
        </authorList>
    </citation>
    <scope>NUCLEOTIDE SEQUENCE [LARGE SCALE GENOMIC DNA]</scope>
    <source>
        <strain>IP 31758</strain>
    </source>
</reference>
<organism>
    <name type="scientific">Yersinia pseudotuberculosis serotype O:1b (strain IP 31758)</name>
    <dbReference type="NCBI Taxonomy" id="349747"/>
    <lineage>
        <taxon>Bacteria</taxon>
        <taxon>Pseudomonadati</taxon>
        <taxon>Pseudomonadota</taxon>
        <taxon>Gammaproteobacteria</taxon>
        <taxon>Enterobacterales</taxon>
        <taxon>Yersiniaceae</taxon>
        <taxon>Yersinia</taxon>
    </lineage>
</organism>
<evidence type="ECO:0000255" key="1">
    <source>
        <dbReference type="HAMAP-Rule" id="MF_00373"/>
    </source>
</evidence>
<evidence type="ECO:0000256" key="2">
    <source>
        <dbReference type="SAM" id="MobiDB-lite"/>
    </source>
</evidence>
<evidence type="ECO:0000305" key="3"/>
<feature type="chain" id="PRO_1000059959" description="Large ribosomal subunit protein bL28">
    <location>
        <begin position="1"/>
        <end position="78"/>
    </location>
</feature>
<feature type="region of interest" description="Disordered" evidence="2">
    <location>
        <begin position="1"/>
        <end position="22"/>
    </location>
</feature>
<accession>A7FCT5</accession>